<gene>
    <name type="primary">lyrm9</name>
    <name type="ORF">zgc:193694</name>
</gene>
<proteinExistence type="inferred from homology"/>
<reference key="1">
    <citation type="submission" date="2008-04" db="EMBL/GenBank/DDBJ databases">
        <authorList>
            <consortium name="NIH - Zebrafish Gene Collection (ZGC) project"/>
        </authorList>
    </citation>
    <scope>NUCLEOTIDE SEQUENCE [LARGE SCALE MRNA]</scope>
</reference>
<accession>B3DFV0</accession>
<protein>
    <recommendedName>
        <fullName>LYR motif-containing protein 9</fullName>
    </recommendedName>
</protein>
<evidence type="ECO:0000305" key="1"/>
<feature type="chain" id="PRO_0000360427" description="LYR motif-containing protein 9">
    <location>
        <begin position="1"/>
        <end position="78"/>
    </location>
</feature>
<organism>
    <name type="scientific">Danio rerio</name>
    <name type="common">Zebrafish</name>
    <name type="synonym">Brachydanio rerio</name>
    <dbReference type="NCBI Taxonomy" id="7955"/>
    <lineage>
        <taxon>Eukaryota</taxon>
        <taxon>Metazoa</taxon>
        <taxon>Chordata</taxon>
        <taxon>Craniata</taxon>
        <taxon>Vertebrata</taxon>
        <taxon>Euteleostomi</taxon>
        <taxon>Actinopterygii</taxon>
        <taxon>Neopterygii</taxon>
        <taxon>Teleostei</taxon>
        <taxon>Ostariophysi</taxon>
        <taxon>Cypriniformes</taxon>
        <taxon>Danionidae</taxon>
        <taxon>Danioninae</taxon>
        <taxon>Danio</taxon>
    </lineage>
</organism>
<sequence length="78" mass="9278">MSPVAGAKFVRTPLQLYRYLLRCCRLLPSEAMQKHYQHAIRQSYNSHVDEDDPQRIQMIIQRAISDADWILNKYTKKK</sequence>
<name>LYRM9_DANRE</name>
<dbReference type="EMBL" id="BC162173">
    <property type="protein sequence ID" value="AAI62173.1"/>
    <property type="molecule type" value="mRNA"/>
</dbReference>
<dbReference type="EMBL" id="BC162176">
    <property type="protein sequence ID" value="AAI62176.1"/>
    <property type="molecule type" value="mRNA"/>
</dbReference>
<dbReference type="RefSeq" id="NP_001153455.1">
    <property type="nucleotide sequence ID" value="NM_001159983.2"/>
</dbReference>
<dbReference type="SMR" id="B3DFV0"/>
<dbReference type="FunCoup" id="B3DFV0">
    <property type="interactions" value="120"/>
</dbReference>
<dbReference type="STRING" id="7955.ENSDARP00000100356"/>
<dbReference type="PaxDb" id="7955-ENSDARP00000100356"/>
<dbReference type="Ensembl" id="ENSDART00000112784">
    <property type="protein sequence ID" value="ENSDARP00000100356"/>
    <property type="gene ID" value="ENSDARG00000075528"/>
</dbReference>
<dbReference type="GeneID" id="563525"/>
<dbReference type="KEGG" id="dre:563525"/>
<dbReference type="AGR" id="ZFIN:ZDB-GENE-081022-28"/>
<dbReference type="CTD" id="201229"/>
<dbReference type="ZFIN" id="ZDB-GENE-081022-28">
    <property type="gene designation" value="lyrm9"/>
</dbReference>
<dbReference type="eggNOG" id="ENOG502S9QI">
    <property type="taxonomic scope" value="Eukaryota"/>
</dbReference>
<dbReference type="HOGENOM" id="CLU_183410_0_0_1"/>
<dbReference type="InParanoid" id="B3DFV0"/>
<dbReference type="OMA" id="HYKHHVR"/>
<dbReference type="OrthoDB" id="190541at2759"/>
<dbReference type="PhylomeDB" id="B3DFV0"/>
<dbReference type="TreeFam" id="TF335914"/>
<dbReference type="PRO" id="PR:B3DFV0"/>
<dbReference type="Proteomes" id="UP000000437">
    <property type="component" value="Chromosome 15"/>
</dbReference>
<dbReference type="Bgee" id="ENSDARG00000075528">
    <property type="expression patterns" value="Expressed in early embryo and 27 other cell types or tissues"/>
</dbReference>
<dbReference type="CDD" id="cd20269">
    <property type="entry name" value="Complex1_LYR_LYRM9"/>
    <property type="match status" value="1"/>
</dbReference>
<dbReference type="InterPro" id="IPR008011">
    <property type="entry name" value="Complex1_LYR_dom"/>
</dbReference>
<dbReference type="InterPro" id="IPR045291">
    <property type="entry name" value="Complex1_LYR_LYRM9"/>
</dbReference>
<dbReference type="InterPro" id="IPR052151">
    <property type="entry name" value="Complex_I_LYR"/>
</dbReference>
<dbReference type="PANTHER" id="PTHR47061">
    <property type="entry name" value="LYR MOTIF-CONTAINING PROTEIN 9"/>
    <property type="match status" value="1"/>
</dbReference>
<dbReference type="PANTHER" id="PTHR47061:SF1">
    <property type="entry name" value="LYR MOTIF-CONTAINING PROTEIN 9"/>
    <property type="match status" value="1"/>
</dbReference>
<dbReference type="Pfam" id="PF05347">
    <property type="entry name" value="Complex1_LYR"/>
    <property type="match status" value="1"/>
</dbReference>
<comment type="similarity">
    <text evidence="1">Belongs to the complex I LYR family. LYRM9 subfamily.</text>
</comment>
<keyword id="KW-1185">Reference proteome</keyword>